<feature type="chain" id="PRO_0000314901" description="Extended synaptotagmin-3">
    <location>
        <begin position="1"/>
        <end position="889"/>
    </location>
</feature>
<feature type="topological domain" description="Cytoplasmic" evidence="4">
    <location>
        <begin position="1"/>
        <end position="66"/>
    </location>
</feature>
<feature type="transmembrane region" description="Helical" evidence="4">
    <location>
        <begin position="67"/>
        <end position="91"/>
    </location>
</feature>
<feature type="transmembrane region" description="Helical" evidence="4">
    <location>
        <begin position="92"/>
        <end position="112"/>
    </location>
</feature>
<feature type="topological domain" description="Cytoplasmic" evidence="4">
    <location>
        <begin position="113"/>
        <end position="889"/>
    </location>
</feature>
<feature type="domain" description="SMP-LTD" evidence="6">
    <location>
        <begin position="155"/>
        <end position="333"/>
    </location>
</feature>
<feature type="domain" description="C2 1" evidence="5">
    <location>
        <begin position="331"/>
        <end position="452"/>
    </location>
</feature>
<feature type="domain" description="C2 2" evidence="5">
    <location>
        <begin position="468"/>
        <end position="618"/>
    </location>
</feature>
<feature type="domain" description="C2 3" evidence="5">
    <location>
        <begin position="757"/>
        <end position="879"/>
    </location>
</feature>
<feature type="region of interest" description="Disordered" evidence="7">
    <location>
        <begin position="1"/>
        <end position="65"/>
    </location>
</feature>
<feature type="region of interest" description="Disordered" evidence="7">
    <location>
        <begin position="649"/>
        <end position="724"/>
    </location>
</feature>
<feature type="region of interest" description="Required for phosphatidylinositol 4,5-bisphosphate-dependent location at the cell membrane" evidence="1">
    <location>
        <begin position="804"/>
        <end position="811"/>
    </location>
</feature>
<feature type="compositionally biased region" description="Basic and acidic residues" evidence="7">
    <location>
        <begin position="17"/>
        <end position="28"/>
    </location>
</feature>
<feature type="compositionally biased region" description="Basic and acidic residues" evidence="7">
    <location>
        <begin position="41"/>
        <end position="58"/>
    </location>
</feature>
<feature type="compositionally biased region" description="Basic residues" evidence="7">
    <location>
        <begin position="658"/>
        <end position="671"/>
    </location>
</feature>
<feature type="compositionally biased region" description="Low complexity" evidence="7">
    <location>
        <begin position="672"/>
        <end position="682"/>
    </location>
</feature>
<feature type="compositionally biased region" description="Low complexity" evidence="7">
    <location>
        <begin position="691"/>
        <end position="714"/>
    </location>
</feature>
<feature type="binding site" evidence="1">
    <location>
        <position position="363"/>
    </location>
    <ligand>
        <name>Ca(2+)</name>
        <dbReference type="ChEBI" id="CHEBI:29108"/>
        <label>1</label>
    </ligand>
</feature>
<feature type="binding site" evidence="1">
    <location>
        <position position="364"/>
    </location>
    <ligand>
        <name>Ca(2+)</name>
        <dbReference type="ChEBI" id="CHEBI:29108"/>
        <label>1</label>
    </ligand>
</feature>
<feature type="binding site" evidence="1">
    <location>
        <position position="364"/>
    </location>
    <ligand>
        <name>Ca(2+)</name>
        <dbReference type="ChEBI" id="CHEBI:29108"/>
        <label>2</label>
    </ligand>
</feature>
<feature type="binding site" evidence="1">
    <location>
        <position position="376"/>
    </location>
    <ligand>
        <name>Ca(2+)</name>
        <dbReference type="ChEBI" id="CHEBI:29108"/>
        <label>2</label>
    </ligand>
</feature>
<feature type="binding site" evidence="1">
    <location>
        <position position="423"/>
    </location>
    <ligand>
        <name>Ca(2+)</name>
        <dbReference type="ChEBI" id="CHEBI:29108"/>
        <label>1</label>
    </ligand>
</feature>
<feature type="binding site" evidence="1">
    <location>
        <position position="423"/>
    </location>
    <ligand>
        <name>Ca(2+)</name>
        <dbReference type="ChEBI" id="CHEBI:29108"/>
        <label>2</label>
    </ligand>
</feature>
<feature type="binding site" evidence="1">
    <location>
        <position position="424"/>
    </location>
    <ligand>
        <name>Ca(2+)</name>
        <dbReference type="ChEBI" id="CHEBI:29108"/>
        <label>2</label>
    </ligand>
</feature>
<feature type="binding site" evidence="1">
    <location>
        <position position="425"/>
    </location>
    <ligand>
        <name>Ca(2+)</name>
        <dbReference type="ChEBI" id="CHEBI:29108"/>
        <label>1</label>
    </ligand>
</feature>
<feature type="binding site" evidence="1">
    <location>
        <position position="425"/>
    </location>
    <ligand>
        <name>Ca(2+)</name>
        <dbReference type="ChEBI" id="CHEBI:29108"/>
        <label>2</label>
    </ligand>
</feature>
<feature type="binding site" evidence="1">
    <location>
        <position position="425"/>
    </location>
    <ligand>
        <name>Ca(2+)</name>
        <dbReference type="ChEBI" id="CHEBI:29108"/>
        <label>3</label>
    </ligand>
</feature>
<feature type="binding site" evidence="1">
    <location>
        <position position="427"/>
    </location>
    <ligand>
        <name>Ca(2+)</name>
        <dbReference type="ChEBI" id="CHEBI:29108"/>
        <label>3</label>
    </ligand>
</feature>
<feature type="binding site" evidence="1">
    <location>
        <position position="429"/>
    </location>
    <ligand>
        <name>Ca(2+)</name>
        <dbReference type="ChEBI" id="CHEBI:29108"/>
        <label>3</label>
    </ligand>
</feature>
<feature type="binding site" evidence="1">
    <location>
        <position position="430"/>
    </location>
    <ligand>
        <name>Ca(2+)</name>
        <dbReference type="ChEBI" id="CHEBI:29108"/>
        <label>1</label>
    </ligand>
</feature>
<sequence length="889" mass="99594">MAQGDPGGQTPQAPQGTDKKPDEPKATEKPQGAGPQPRDPPGGEKGLRDPPGGEKGPRDPGQGGAGEALAEALYGLGRPVLRAVLYLFPVYLCGRFGLSPTWLLFGLFLWMFWTRNKKFKLARIQAAWDLHENEKLGVTRGLYLQQLPAWVNFPDVERVEWLNKVVGQMWPYIGMYVEKMFQDKVEPLVRSSSAHLKAFTFTKVHLGEKFPRINGVKSYTKNVDKREVILDLQLSYNGDVEINVEVKKMCKAGVKGVQLHGTLRVILAPLLPDLPFVGAVTMFFIQRPHLDINWTGLTNVLEIPGVSDFSDSMIVDMIASHLVLPNRFTVPLSSQVQAAQLRFPLPHGVLRLHLIEAEDLIPKDNYLKGIIRGKSDPYAVLRIGNQNFKSRTIKENLNPKWGEMYEFVVHEVPGQDLEVDLYDEDPDKDDFLGSLVIGLEGVMQDRVVDEWFPLSDVPSGSVHLRLEWLSLLPKSEKLSEAKGGISTAMLIVYLDSASALPRNHFEYSSSEYTTRKQRHMTYTKTDKDPNSYVLMSVGKKSVKSKTCTGSTEPVWGQAFAFFIQDVHMQHLHLEVKDSERQCALGMLDLPLHRLLGNEELTADQRFPLANSGPNSTIKMKIVLRVLHVEAPEPESIYTGINSLKQGPVSIKRAQSQQHKSHGKSHQAHHQAHQTQQNHTVQQPKAERKESISTTSQQANTSSSNPAPNQNPNSTGAVPESHTPSLKPLERIAPSLLSLNSIGSSVFDPNDKRWPSEMTGEVEVSVRYASLRRCLVVLINSCRNLIQCSSNGADPYVRIYLLPDRKWSGRKKTSVKRKTLNPQYNERFEFLVSQEEAKKRMLDVAVKNNRGFGSHERKELGKVLVDLSCDDLVKGFTKWFELTPTGLPTS</sequence>
<comment type="function">
    <text evidence="1">Tethers the endoplasmic reticulum to the cell membrane and promotes the formation of appositions between the endoplasmic reticulum and the cell membrane. Binds glycerophospholipids in a barrel-like domain and may play a role in cellular lipid transport (By similarity).</text>
</comment>
<comment type="subcellular location">
    <subcellularLocation>
        <location evidence="3">Cell membrane</location>
        <topology evidence="3">Peripheral membrane protein</topology>
    </subcellularLocation>
    <subcellularLocation>
        <location evidence="3">Endoplasmic reticulum membrane</location>
        <topology evidence="4">Multi-pass membrane protein</topology>
    </subcellularLocation>
    <text evidence="3">Localizes to endoplasmic reticulum-plasma membrane contact sites (EPCS). Recruited to the cell membrane via the third C2 domain (By similarity).</text>
</comment>
<comment type="domain">
    <text evidence="2">The SMP-LTD domain is a barrel-like domain that binds glycerophospholipids in its interior (By similarity).</text>
</comment>
<comment type="similarity">
    <text evidence="8">Belongs to the extended synaptotagmin family.</text>
</comment>
<accession>Q5M7N9</accession>
<proteinExistence type="evidence at transcript level"/>
<protein>
    <recommendedName>
        <fullName>Extended synaptotagmin-3</fullName>
        <shortName>E-Syt3</shortName>
    </recommendedName>
</protein>
<organism>
    <name type="scientific">Xenopus tropicalis</name>
    <name type="common">Western clawed frog</name>
    <name type="synonym">Silurana tropicalis</name>
    <dbReference type="NCBI Taxonomy" id="8364"/>
    <lineage>
        <taxon>Eukaryota</taxon>
        <taxon>Metazoa</taxon>
        <taxon>Chordata</taxon>
        <taxon>Craniata</taxon>
        <taxon>Vertebrata</taxon>
        <taxon>Euteleostomi</taxon>
        <taxon>Amphibia</taxon>
        <taxon>Batrachia</taxon>
        <taxon>Anura</taxon>
        <taxon>Pipoidea</taxon>
        <taxon>Pipidae</taxon>
        <taxon>Xenopodinae</taxon>
        <taxon>Xenopus</taxon>
        <taxon>Silurana</taxon>
    </lineage>
</organism>
<gene>
    <name type="primary">esyt3</name>
    <name type="synonym">fam62c</name>
</gene>
<evidence type="ECO:0000250" key="1"/>
<evidence type="ECO:0000250" key="2">
    <source>
        <dbReference type="UniProtKB" id="A0FGR8"/>
    </source>
</evidence>
<evidence type="ECO:0000250" key="3">
    <source>
        <dbReference type="UniProtKB" id="A0FGR9"/>
    </source>
</evidence>
<evidence type="ECO:0000255" key="4"/>
<evidence type="ECO:0000255" key="5">
    <source>
        <dbReference type="PROSITE-ProRule" id="PRU00041"/>
    </source>
</evidence>
<evidence type="ECO:0000255" key="6">
    <source>
        <dbReference type="PROSITE-ProRule" id="PRU01194"/>
    </source>
</evidence>
<evidence type="ECO:0000256" key="7">
    <source>
        <dbReference type="SAM" id="MobiDB-lite"/>
    </source>
</evidence>
<evidence type="ECO:0000305" key="8"/>
<dbReference type="EMBL" id="BC088530">
    <property type="protein sequence ID" value="AAH88530.1"/>
    <property type="molecule type" value="mRNA"/>
</dbReference>
<dbReference type="RefSeq" id="NP_001011364.1">
    <property type="nucleotide sequence ID" value="NM_001011364.1"/>
</dbReference>
<dbReference type="SMR" id="Q5M7N9"/>
<dbReference type="FunCoup" id="Q5M7N9">
    <property type="interactions" value="315"/>
</dbReference>
<dbReference type="GeneID" id="496831"/>
<dbReference type="KEGG" id="xtr:496831"/>
<dbReference type="AGR" id="Xenbase:XB-GENE-5746165"/>
<dbReference type="CTD" id="83850"/>
<dbReference type="Xenbase" id="XB-GENE-5746165">
    <property type="gene designation" value="esyt3"/>
</dbReference>
<dbReference type="InParanoid" id="Q5M7N9"/>
<dbReference type="OMA" id="EAFIDNT"/>
<dbReference type="OrthoDB" id="1029639at2759"/>
<dbReference type="Proteomes" id="UP000008143">
    <property type="component" value="Chromosome 9"/>
</dbReference>
<dbReference type="GO" id="GO:0005789">
    <property type="term" value="C:endoplasmic reticulum membrane"/>
    <property type="evidence" value="ECO:0007669"/>
    <property type="project" value="UniProtKB-SubCell"/>
</dbReference>
<dbReference type="GO" id="GO:0140268">
    <property type="term" value="C:endoplasmic reticulum-plasma membrane contact site"/>
    <property type="evidence" value="ECO:0000250"/>
    <property type="project" value="UniProtKB"/>
</dbReference>
<dbReference type="GO" id="GO:0005886">
    <property type="term" value="C:plasma membrane"/>
    <property type="evidence" value="ECO:0007669"/>
    <property type="project" value="UniProtKB-SubCell"/>
</dbReference>
<dbReference type="GO" id="GO:0008289">
    <property type="term" value="F:lipid binding"/>
    <property type="evidence" value="ECO:0007669"/>
    <property type="project" value="UniProtKB-KW"/>
</dbReference>
<dbReference type="GO" id="GO:0046872">
    <property type="term" value="F:metal ion binding"/>
    <property type="evidence" value="ECO:0007669"/>
    <property type="project" value="UniProtKB-KW"/>
</dbReference>
<dbReference type="GO" id="GO:0061817">
    <property type="term" value="P:endoplasmic reticulum-plasma membrane tethering"/>
    <property type="evidence" value="ECO:0007669"/>
    <property type="project" value="InterPro"/>
</dbReference>
<dbReference type="GO" id="GO:0006869">
    <property type="term" value="P:lipid transport"/>
    <property type="evidence" value="ECO:0007669"/>
    <property type="project" value="UniProtKB-KW"/>
</dbReference>
<dbReference type="CDD" id="cd08391">
    <property type="entry name" value="C2A_C2C_Synaptotagmin_like"/>
    <property type="match status" value="1"/>
</dbReference>
<dbReference type="CDD" id="cd04050">
    <property type="entry name" value="C2B_Synaptotagmin-like"/>
    <property type="match status" value="1"/>
</dbReference>
<dbReference type="CDD" id="cd04030">
    <property type="entry name" value="C2C_KIAA1228"/>
    <property type="match status" value="1"/>
</dbReference>
<dbReference type="CDD" id="cd21681">
    <property type="entry name" value="SMP_ESyt3"/>
    <property type="match status" value="1"/>
</dbReference>
<dbReference type="FunFam" id="2.60.40.150:FF:000025">
    <property type="entry name" value="Extended synaptotagmin 2"/>
    <property type="match status" value="1"/>
</dbReference>
<dbReference type="FunFam" id="2.60.40.150:FF:000093">
    <property type="entry name" value="Extended synaptotagmin 3"/>
    <property type="match status" value="1"/>
</dbReference>
<dbReference type="FunFam" id="2.60.40.150:FF:000114">
    <property type="entry name" value="Extended synaptotagmin 3"/>
    <property type="match status" value="1"/>
</dbReference>
<dbReference type="Gene3D" id="2.60.40.150">
    <property type="entry name" value="C2 domain"/>
    <property type="match status" value="3"/>
</dbReference>
<dbReference type="InterPro" id="IPR000008">
    <property type="entry name" value="C2_dom"/>
</dbReference>
<dbReference type="InterPro" id="IPR035892">
    <property type="entry name" value="C2_domain_sf"/>
</dbReference>
<dbReference type="InterPro" id="IPR037752">
    <property type="entry name" value="C2C_KIAA1228"/>
</dbReference>
<dbReference type="InterPro" id="IPR037733">
    <property type="entry name" value="Ext_Synaptotagmin_C2A"/>
</dbReference>
<dbReference type="InterPro" id="IPR037749">
    <property type="entry name" value="Ext_Synaptotagmin_C2B"/>
</dbReference>
<dbReference type="InterPro" id="IPR051634">
    <property type="entry name" value="Extended_Synaptotagmin"/>
</dbReference>
<dbReference type="InterPro" id="IPR031468">
    <property type="entry name" value="SMP_LBD"/>
</dbReference>
<dbReference type="InterPro" id="IPR039010">
    <property type="entry name" value="Synaptotagmin_SMP"/>
</dbReference>
<dbReference type="PANTHER" id="PTHR45761:SF4">
    <property type="entry name" value="EXTENDED SYNAPTOTAGMIN-3"/>
    <property type="match status" value="1"/>
</dbReference>
<dbReference type="PANTHER" id="PTHR45761">
    <property type="entry name" value="EXTENDED SYNAPTOTAGMIN-LIKE PROTEIN 2, ISOFORM C"/>
    <property type="match status" value="1"/>
</dbReference>
<dbReference type="Pfam" id="PF00168">
    <property type="entry name" value="C2"/>
    <property type="match status" value="3"/>
</dbReference>
<dbReference type="Pfam" id="PF17047">
    <property type="entry name" value="SMP_LBD"/>
    <property type="match status" value="1"/>
</dbReference>
<dbReference type="SMART" id="SM00239">
    <property type="entry name" value="C2"/>
    <property type="match status" value="3"/>
</dbReference>
<dbReference type="SUPFAM" id="SSF49562">
    <property type="entry name" value="C2 domain (Calcium/lipid-binding domain, CaLB)"/>
    <property type="match status" value="3"/>
</dbReference>
<dbReference type="PROSITE" id="PS50004">
    <property type="entry name" value="C2"/>
    <property type="match status" value="3"/>
</dbReference>
<dbReference type="PROSITE" id="PS51847">
    <property type="entry name" value="SMP"/>
    <property type="match status" value="1"/>
</dbReference>
<name>ESYT3_XENTR</name>
<reference key="1">
    <citation type="submission" date="2004-12" db="EMBL/GenBank/DDBJ databases">
        <authorList>
            <consortium name="NIH - Xenopus Gene Collection (XGC) project"/>
        </authorList>
    </citation>
    <scope>NUCLEOTIDE SEQUENCE [LARGE SCALE MRNA]</scope>
    <source>
        <tissue>Embryo</tissue>
    </source>
</reference>
<keyword id="KW-0106">Calcium</keyword>
<keyword id="KW-1003">Cell membrane</keyword>
<keyword id="KW-0256">Endoplasmic reticulum</keyword>
<keyword id="KW-0445">Lipid transport</keyword>
<keyword id="KW-0446">Lipid-binding</keyword>
<keyword id="KW-0472">Membrane</keyword>
<keyword id="KW-0479">Metal-binding</keyword>
<keyword id="KW-1185">Reference proteome</keyword>
<keyword id="KW-0677">Repeat</keyword>
<keyword id="KW-0812">Transmembrane</keyword>
<keyword id="KW-1133">Transmembrane helix</keyword>
<keyword id="KW-0813">Transport</keyword>